<feature type="chain" id="PRO_0000384256" description="Maintenance of mitochondrial morphology protein 1">
    <location>
        <begin position="1"/>
        <end position="493"/>
    </location>
</feature>
<feature type="topological domain" description="Lumenal" evidence="1">
    <location>
        <begin position="1"/>
        <end position="23"/>
    </location>
</feature>
<feature type="transmembrane region" description="Helical" evidence="1">
    <location>
        <begin position="24"/>
        <end position="44"/>
    </location>
</feature>
<feature type="topological domain" description="Cytoplasmic" evidence="1">
    <location>
        <begin position="45"/>
        <end position="493"/>
    </location>
</feature>
<feature type="domain" description="SMP-LTD" evidence="1">
    <location>
        <begin position="140"/>
        <end position="391"/>
    </location>
</feature>
<feature type="region of interest" description="Disordered" evidence="2">
    <location>
        <begin position="52"/>
        <end position="104"/>
    </location>
</feature>
<feature type="region of interest" description="Disordered" evidence="2">
    <location>
        <begin position="420"/>
        <end position="493"/>
    </location>
</feature>
<feature type="compositionally biased region" description="Low complexity" evidence="2">
    <location>
        <begin position="69"/>
        <end position="81"/>
    </location>
</feature>
<feature type="compositionally biased region" description="Polar residues" evidence="2">
    <location>
        <begin position="93"/>
        <end position="104"/>
    </location>
</feature>
<evidence type="ECO:0000255" key="1">
    <source>
        <dbReference type="HAMAP-Rule" id="MF_03103"/>
    </source>
</evidence>
<evidence type="ECO:0000256" key="2">
    <source>
        <dbReference type="SAM" id="MobiDB-lite"/>
    </source>
</evidence>
<comment type="function">
    <text evidence="1">Component of the ERMES/MDM complex, which serves as a molecular tether to connect the endoplasmic reticulum (ER) and mitochondria. Components of this complex are involved in the control of mitochondrial shape and protein biogenesis, and function in nonvesicular lipid trafficking between the ER and mitochondria. The mdm12-mmm1 subcomplex functions in the major beta-barrel assembly pathway that is responsible for biogenesis of all outer membrane beta-barrel proteins, and acts in a late step after the SAM complex. The mdm10-mdm12-mmm1 subcomplex further acts in the TOM40-specific pathway after the action of the mdm12-mmm1 complex. Essential for establishing and maintaining the structure of mitochondria and maintenance of mtDNA nucleoids.</text>
</comment>
<comment type="subunit">
    <text evidence="1">Homodimer. Component of the ER-mitochondria encounter structure (ERMES) or MDM complex, composed of mmm1, mdm10, mdm12 and mdm34. A mmm1 homodimer associates with one molecule of mdm12 on each side in a pairwise head-to-tail manner, and the SMP-LTD domains of mmm1 and mdm12 generate a continuous hydrophobic tunnel for phospholipid trafficking.</text>
</comment>
<comment type="subcellular location">
    <subcellularLocation>
        <location evidence="1">Endoplasmic reticulum membrane</location>
        <topology evidence="1">Single-pass type I membrane protein</topology>
    </subcellularLocation>
    <text evidence="1">The ERMES/MDM complex localizes to a few discrete foci (around 10 per single cell), that represent mitochondria-endoplasmic reticulum junctions. These foci are often found next to mtDNA nucleoids.</text>
</comment>
<comment type="domain">
    <text evidence="1">The SMP-LTD domain is a barrel-like domain that can bind various types of glycerophospholipids in its interior and mediate their transfer between two adjacent bilayers.</text>
</comment>
<comment type="similarity">
    <text evidence="1">Belongs to the MMM1 family.</text>
</comment>
<gene>
    <name evidence="1" type="primary">mmm1</name>
    <name type="ORF">TSTA_005180</name>
</gene>
<sequence>MSQHSQYGVPGVPAQSSLSFTQGFLLGQLSVVLLIGAFIKFFIFGEAPAPPSRGLASRTASHHRSYSINQGDNNANNNTNNGSSPRTLREKPSTSNVLRPVPSSATNTRSILRKTYYNAIPTQLSHTKQGRHRIQHSTHQPESLDWFNVLIAQTIAQYRQTAYLLKDSPTSSILDSLSAAINDPQKKPSFIDTIKVTDISLGEEFPIFSNCRVIAVDDSNSDGGRLQALMDVDLSDDNLSLAIETSLILNYPKPRSAVLPVALSVSVVRFSGTLCISLIPASTPQSPSSAPTPDAGNLNMRSLFQHISAELNGTAPNPTATNPSGKKGVPKTNLAFSFLPDYRLDLSVRSLIGSRSRLQDVPKVAQLVEARIQSWFEERVVEPRVQVVGLPDFWPRMGRTGVRPGDDVEAAAAAAAASVSSRSGGGPVEATTLSGSAEEAIIDDSPVRPGLRFRGSATATAGRSDSSFEEIPRASPQTPLDIPGSMPRVVRTP</sequence>
<proteinExistence type="inferred from homology"/>
<protein>
    <recommendedName>
        <fullName evidence="1">Maintenance of mitochondrial morphology protein 1</fullName>
    </recommendedName>
</protein>
<accession>B8MTT8</accession>
<dbReference type="EMBL" id="EQ962660">
    <property type="protein sequence ID" value="EED12481.1"/>
    <property type="molecule type" value="Genomic_DNA"/>
</dbReference>
<dbReference type="RefSeq" id="XP_002488135.1">
    <property type="nucleotide sequence ID" value="XM_002488090.1"/>
</dbReference>
<dbReference type="SMR" id="B8MTT8"/>
<dbReference type="FunCoup" id="B8MTT8">
    <property type="interactions" value="69"/>
</dbReference>
<dbReference type="STRING" id="441959.B8MTT8"/>
<dbReference type="GeneID" id="8104502"/>
<dbReference type="VEuPathDB" id="FungiDB:TSTA_005180"/>
<dbReference type="eggNOG" id="ENOG502QUUW">
    <property type="taxonomic scope" value="Eukaryota"/>
</dbReference>
<dbReference type="HOGENOM" id="CLU_032730_1_0_1"/>
<dbReference type="InParanoid" id="B8MTT8"/>
<dbReference type="OMA" id="WSFTQGL"/>
<dbReference type="OrthoDB" id="5376138at2759"/>
<dbReference type="PhylomeDB" id="B8MTT8"/>
<dbReference type="Proteomes" id="UP000001745">
    <property type="component" value="Unassembled WGS sequence"/>
</dbReference>
<dbReference type="GO" id="GO:0005789">
    <property type="term" value="C:endoplasmic reticulum membrane"/>
    <property type="evidence" value="ECO:0007669"/>
    <property type="project" value="UniProtKB-SubCell"/>
</dbReference>
<dbReference type="GO" id="GO:0032865">
    <property type="term" value="C:ERMES complex"/>
    <property type="evidence" value="ECO:0007669"/>
    <property type="project" value="UniProtKB-UniRule"/>
</dbReference>
<dbReference type="GO" id="GO:0008289">
    <property type="term" value="F:lipid binding"/>
    <property type="evidence" value="ECO:0007669"/>
    <property type="project" value="UniProtKB-KW"/>
</dbReference>
<dbReference type="GO" id="GO:0000002">
    <property type="term" value="P:mitochondrial genome maintenance"/>
    <property type="evidence" value="ECO:0007669"/>
    <property type="project" value="UniProtKB-UniRule"/>
</dbReference>
<dbReference type="GO" id="GO:1990456">
    <property type="term" value="P:mitochondrion-endoplasmic reticulum membrane tethering"/>
    <property type="evidence" value="ECO:0007669"/>
    <property type="project" value="TreeGrafter"/>
</dbReference>
<dbReference type="GO" id="GO:0015914">
    <property type="term" value="P:phospholipid transport"/>
    <property type="evidence" value="ECO:0007669"/>
    <property type="project" value="TreeGrafter"/>
</dbReference>
<dbReference type="GO" id="GO:0045040">
    <property type="term" value="P:protein insertion into mitochondrial outer membrane"/>
    <property type="evidence" value="ECO:0007669"/>
    <property type="project" value="UniProtKB-UniRule"/>
</dbReference>
<dbReference type="CDD" id="cd21671">
    <property type="entry name" value="SMP_Mmm1"/>
    <property type="match status" value="1"/>
</dbReference>
<dbReference type="HAMAP" id="MF_03103">
    <property type="entry name" value="Mmm1"/>
    <property type="match status" value="1"/>
</dbReference>
<dbReference type="InterPro" id="IPR027537">
    <property type="entry name" value="Mmm1"/>
</dbReference>
<dbReference type="InterPro" id="IPR019411">
    <property type="entry name" value="MMM1_dom"/>
</dbReference>
<dbReference type="InterPro" id="IPR031468">
    <property type="entry name" value="SMP_LBD"/>
</dbReference>
<dbReference type="PANTHER" id="PTHR13466:SF0">
    <property type="entry name" value="SMP-LTD DOMAIN-CONTAINING PROTEIN"/>
    <property type="match status" value="1"/>
</dbReference>
<dbReference type="PANTHER" id="PTHR13466">
    <property type="entry name" value="TEX2 PROTEIN-RELATED"/>
    <property type="match status" value="1"/>
</dbReference>
<dbReference type="Pfam" id="PF10296">
    <property type="entry name" value="MMM1"/>
    <property type="match status" value="1"/>
</dbReference>
<dbReference type="PROSITE" id="PS51847">
    <property type="entry name" value="SMP"/>
    <property type="match status" value="1"/>
</dbReference>
<reference key="1">
    <citation type="journal article" date="2015" name="Genome Announc.">
        <title>Genome sequence of the AIDS-associated pathogen Penicillium marneffei (ATCC18224) and its near taxonomic relative Talaromyces stipitatus (ATCC10500).</title>
        <authorList>
            <person name="Nierman W.C."/>
            <person name="Fedorova-Abrams N.D."/>
            <person name="Andrianopoulos A."/>
        </authorList>
    </citation>
    <scope>NUCLEOTIDE SEQUENCE [LARGE SCALE GENOMIC DNA]</scope>
    <source>
        <strain>ATCC 10500 / CBS 375.48 / QM 6759 / NRRL 1006</strain>
    </source>
</reference>
<organism>
    <name type="scientific">Talaromyces stipitatus (strain ATCC 10500 / CBS 375.48 / QM 6759 / NRRL 1006)</name>
    <name type="common">Penicillium stipitatum</name>
    <dbReference type="NCBI Taxonomy" id="441959"/>
    <lineage>
        <taxon>Eukaryota</taxon>
        <taxon>Fungi</taxon>
        <taxon>Dikarya</taxon>
        <taxon>Ascomycota</taxon>
        <taxon>Pezizomycotina</taxon>
        <taxon>Eurotiomycetes</taxon>
        <taxon>Eurotiomycetidae</taxon>
        <taxon>Eurotiales</taxon>
        <taxon>Trichocomaceae</taxon>
        <taxon>Talaromyces</taxon>
        <taxon>Talaromyces sect. Talaromyces</taxon>
    </lineage>
</organism>
<name>MMM1_TALSN</name>
<keyword id="KW-0256">Endoplasmic reticulum</keyword>
<keyword id="KW-0445">Lipid transport</keyword>
<keyword id="KW-0446">Lipid-binding</keyword>
<keyword id="KW-0472">Membrane</keyword>
<keyword id="KW-1185">Reference proteome</keyword>
<keyword id="KW-0812">Transmembrane</keyword>
<keyword id="KW-1133">Transmembrane helix</keyword>
<keyword id="KW-0813">Transport</keyword>